<proteinExistence type="evidence at transcript level"/>
<accession>Q5NA06</accession>
<accession>A0A0P0VAB4</accession>
<accession>B7EMN5</accession>
<accession>Q0JHW6</accession>
<keyword id="KW-0963">Cytoplasm</keyword>
<keyword id="KW-0968">Cytoplasmic vesicle</keyword>
<keyword id="KW-0931">ER-Golgi transport</keyword>
<keyword id="KW-0333">Golgi apparatus</keyword>
<keyword id="KW-0472">Membrane</keyword>
<keyword id="KW-0653">Protein transport</keyword>
<keyword id="KW-1185">Reference proteome</keyword>
<keyword id="KW-0813">Transport</keyword>
<name>COPZ3_ORYSJ</name>
<gene>
    <name type="ordered locus">Os01g0838800</name>
    <name type="ordered locus">LOC_Os01g62150</name>
    <name type="ORF">P0031D11.22-1</name>
</gene>
<sequence length="177" mass="19678">MESCPSVKNILVLDSEGKRVAVKYYSDDWPSLSSKQAFEKSVFAKTQKTSARTEAEIVMFDSYFVVYKFIQDLHFFVTGGDEENELILASVLQGFSEAIDYLLRNKVHRRAALENLDLIFLCLDEVVDGGIVLETDAKAILEKVSGHGLEGSGSLTEQKLSSALATAREHFARSIFS</sequence>
<reference key="1">
    <citation type="journal article" date="2002" name="Nature">
        <title>The genome sequence and structure of rice chromosome 1.</title>
        <authorList>
            <person name="Sasaki T."/>
            <person name="Matsumoto T."/>
            <person name="Yamamoto K."/>
            <person name="Sakata K."/>
            <person name="Baba T."/>
            <person name="Katayose Y."/>
            <person name="Wu J."/>
            <person name="Niimura Y."/>
            <person name="Cheng Z."/>
            <person name="Nagamura Y."/>
            <person name="Antonio B.A."/>
            <person name="Kanamori H."/>
            <person name="Hosokawa S."/>
            <person name="Masukawa M."/>
            <person name="Arikawa K."/>
            <person name="Chiden Y."/>
            <person name="Hayashi M."/>
            <person name="Okamoto M."/>
            <person name="Ando T."/>
            <person name="Aoki H."/>
            <person name="Arita K."/>
            <person name="Hamada M."/>
            <person name="Harada C."/>
            <person name="Hijishita S."/>
            <person name="Honda M."/>
            <person name="Ichikawa Y."/>
            <person name="Idonuma A."/>
            <person name="Iijima M."/>
            <person name="Ikeda M."/>
            <person name="Ikeno M."/>
            <person name="Ito S."/>
            <person name="Ito T."/>
            <person name="Ito Y."/>
            <person name="Ito Y."/>
            <person name="Iwabuchi A."/>
            <person name="Kamiya K."/>
            <person name="Karasawa W."/>
            <person name="Katagiri S."/>
            <person name="Kikuta A."/>
            <person name="Kobayashi N."/>
            <person name="Kono I."/>
            <person name="Machita K."/>
            <person name="Maehara T."/>
            <person name="Mizuno H."/>
            <person name="Mizubayashi T."/>
            <person name="Mukai Y."/>
            <person name="Nagasaki H."/>
            <person name="Nakashima M."/>
            <person name="Nakama Y."/>
            <person name="Nakamichi Y."/>
            <person name="Nakamura M."/>
            <person name="Namiki N."/>
            <person name="Negishi M."/>
            <person name="Ohta I."/>
            <person name="Ono N."/>
            <person name="Saji S."/>
            <person name="Sakai K."/>
            <person name="Shibata M."/>
            <person name="Shimokawa T."/>
            <person name="Shomura A."/>
            <person name="Song J."/>
            <person name="Takazaki Y."/>
            <person name="Terasawa K."/>
            <person name="Tsuji K."/>
            <person name="Waki K."/>
            <person name="Yamagata H."/>
            <person name="Yamane H."/>
            <person name="Yoshiki S."/>
            <person name="Yoshihara R."/>
            <person name="Yukawa K."/>
            <person name="Zhong H."/>
            <person name="Iwama H."/>
            <person name="Endo T."/>
            <person name="Ito H."/>
            <person name="Hahn J.H."/>
            <person name="Kim H.-I."/>
            <person name="Eun M.-Y."/>
            <person name="Yano M."/>
            <person name="Jiang J."/>
            <person name="Gojobori T."/>
        </authorList>
    </citation>
    <scope>NUCLEOTIDE SEQUENCE [LARGE SCALE GENOMIC DNA]</scope>
    <source>
        <strain>cv. Nipponbare</strain>
    </source>
</reference>
<reference key="2">
    <citation type="journal article" date="2005" name="Nature">
        <title>The map-based sequence of the rice genome.</title>
        <authorList>
            <consortium name="International rice genome sequencing project (IRGSP)"/>
        </authorList>
    </citation>
    <scope>NUCLEOTIDE SEQUENCE [LARGE SCALE GENOMIC DNA]</scope>
    <source>
        <strain>cv. Nipponbare</strain>
    </source>
</reference>
<reference key="3">
    <citation type="journal article" date="2008" name="Nucleic Acids Res.">
        <title>The rice annotation project database (RAP-DB): 2008 update.</title>
        <authorList>
            <consortium name="The rice annotation project (RAP)"/>
        </authorList>
    </citation>
    <scope>GENOME REANNOTATION</scope>
    <source>
        <strain>cv. Nipponbare</strain>
    </source>
</reference>
<reference key="4">
    <citation type="journal article" date="2013" name="Rice">
        <title>Improvement of the Oryza sativa Nipponbare reference genome using next generation sequence and optical map data.</title>
        <authorList>
            <person name="Kawahara Y."/>
            <person name="de la Bastide M."/>
            <person name="Hamilton J.P."/>
            <person name="Kanamori H."/>
            <person name="McCombie W.R."/>
            <person name="Ouyang S."/>
            <person name="Schwartz D.C."/>
            <person name="Tanaka T."/>
            <person name="Wu J."/>
            <person name="Zhou S."/>
            <person name="Childs K.L."/>
            <person name="Davidson R.M."/>
            <person name="Lin H."/>
            <person name="Quesada-Ocampo L."/>
            <person name="Vaillancourt B."/>
            <person name="Sakai H."/>
            <person name="Lee S.S."/>
            <person name="Kim J."/>
            <person name="Numa H."/>
            <person name="Itoh T."/>
            <person name="Buell C.R."/>
            <person name="Matsumoto T."/>
        </authorList>
    </citation>
    <scope>GENOME REANNOTATION</scope>
    <source>
        <strain>cv. Nipponbare</strain>
    </source>
</reference>
<reference key="5">
    <citation type="journal article" date="2003" name="Science">
        <title>Collection, mapping, and annotation of over 28,000 cDNA clones from japonica rice.</title>
        <authorList>
            <consortium name="The rice full-length cDNA consortium"/>
        </authorList>
    </citation>
    <scope>NUCLEOTIDE SEQUENCE [LARGE SCALE MRNA]</scope>
    <source>
        <strain>cv. Nipponbare</strain>
    </source>
</reference>
<evidence type="ECO:0000250" key="1"/>
<evidence type="ECO:0000250" key="2">
    <source>
        <dbReference type="UniProtKB" id="P53600"/>
    </source>
</evidence>
<evidence type="ECO:0000305" key="3"/>
<feature type="chain" id="PRO_0000285615" description="Coatomer subunit zeta-3">
    <location>
        <begin position="1"/>
        <end position="177"/>
    </location>
</feature>
<protein>
    <recommendedName>
        <fullName>Coatomer subunit zeta-3</fullName>
    </recommendedName>
    <alternativeName>
        <fullName>Zeta-3-coat protein</fullName>
    </alternativeName>
    <alternativeName>
        <fullName>Zeta-COP 3</fullName>
    </alternativeName>
</protein>
<comment type="function">
    <text evidence="2">The coatomer is a cytosolic protein complex that binds to dilysine motifs and reversibly associates with Golgi non-clathrin-coated vesicles, which further mediate biosynthetic protein transport from the ER, via the Golgi up to the trans Golgi network. Coatomer complex is required for budding from Golgi membranes, and is essential for the retrograde Golgi-to-ER transport of dilysine-tagged proteins (By similarity). The zeta subunit may be involved in regulating the coat assembly and, hence, the rate of biosynthetic protein transport due to its association-dissociation properties with the coatomer complex (By similarity).</text>
</comment>
<comment type="subunit">
    <text evidence="1">Oligomeric complex that consists of at least the alpha, beta, beta', gamma, delta, epsilon and zeta subunits.</text>
</comment>
<comment type="subcellular location">
    <subcellularLocation>
        <location evidence="1">Cytoplasm</location>
    </subcellularLocation>
    <subcellularLocation>
        <location evidence="1">Golgi apparatus membrane</location>
        <topology evidence="1">Peripheral membrane protein</topology>
        <orientation evidence="1">Cytoplasmic side</orientation>
    </subcellularLocation>
    <subcellularLocation>
        <location evidence="1">Cytoplasmic vesicle</location>
        <location evidence="1">COPI-coated vesicle membrane</location>
        <topology evidence="1">Peripheral membrane protein</topology>
        <orientation evidence="1">Cytoplasmic side</orientation>
    </subcellularLocation>
    <text evidence="1">The coatomer is cytoplasmic or polymerized on the cytoplasmic side of the Golgi, as well as on the vesicles/buds originating from it.</text>
</comment>
<comment type="similarity">
    <text evidence="3">Belongs to the adaptor complexes small subunit family.</text>
</comment>
<comment type="sequence caution" evidence="3">
    <conflict type="erroneous initiation">
        <sequence resource="EMBL-CDS" id="BAG93632"/>
    </conflict>
    <text>Truncated N-terminus.</text>
</comment>
<organism>
    <name type="scientific">Oryza sativa subsp. japonica</name>
    <name type="common">Rice</name>
    <dbReference type="NCBI Taxonomy" id="39947"/>
    <lineage>
        <taxon>Eukaryota</taxon>
        <taxon>Viridiplantae</taxon>
        <taxon>Streptophyta</taxon>
        <taxon>Embryophyta</taxon>
        <taxon>Tracheophyta</taxon>
        <taxon>Spermatophyta</taxon>
        <taxon>Magnoliopsida</taxon>
        <taxon>Liliopsida</taxon>
        <taxon>Poales</taxon>
        <taxon>Poaceae</taxon>
        <taxon>BOP clade</taxon>
        <taxon>Oryzoideae</taxon>
        <taxon>Oryzeae</taxon>
        <taxon>Oryzinae</taxon>
        <taxon>Oryza</taxon>
        <taxon>Oryza sativa</taxon>
    </lineage>
</organism>
<dbReference type="EMBL" id="AP003231">
    <property type="protein sequence ID" value="BAD81696.1"/>
    <property type="molecule type" value="Genomic_DNA"/>
</dbReference>
<dbReference type="EMBL" id="AP008207">
    <property type="protein sequence ID" value="BAF06662.2"/>
    <property type="molecule type" value="Genomic_DNA"/>
</dbReference>
<dbReference type="EMBL" id="AP014957">
    <property type="protein sequence ID" value="BAS75136.1"/>
    <property type="molecule type" value="Genomic_DNA"/>
</dbReference>
<dbReference type="EMBL" id="AK073775">
    <property type="protein sequence ID" value="BAG93632.1"/>
    <property type="status" value="ALT_INIT"/>
    <property type="molecule type" value="mRNA"/>
</dbReference>
<dbReference type="RefSeq" id="XP_015622411.1">
    <property type="nucleotide sequence ID" value="XM_015766925.1"/>
</dbReference>
<dbReference type="SMR" id="Q5NA06"/>
<dbReference type="FunCoup" id="Q5NA06">
    <property type="interactions" value="2932"/>
</dbReference>
<dbReference type="STRING" id="39947.Q5NA06"/>
<dbReference type="PaxDb" id="39947-Q5NA06"/>
<dbReference type="EnsemblPlants" id="Os01t0838800-02">
    <property type="protein sequence ID" value="Os01t0838800-02"/>
    <property type="gene ID" value="Os01g0838800"/>
</dbReference>
<dbReference type="Gramene" id="Os01t0838800-02">
    <property type="protein sequence ID" value="Os01t0838800-02"/>
    <property type="gene ID" value="Os01g0838800"/>
</dbReference>
<dbReference type="KEGG" id="dosa:Os01g0838800"/>
<dbReference type="eggNOG" id="KOG3343">
    <property type="taxonomic scope" value="Eukaryota"/>
</dbReference>
<dbReference type="InParanoid" id="Q5NA06"/>
<dbReference type="OMA" id="NEDEWLF"/>
<dbReference type="OrthoDB" id="10249988at2759"/>
<dbReference type="Proteomes" id="UP000000763">
    <property type="component" value="Chromosome 1"/>
</dbReference>
<dbReference type="Proteomes" id="UP000059680">
    <property type="component" value="Chromosome 1"/>
</dbReference>
<dbReference type="ExpressionAtlas" id="Q5NA06">
    <property type="expression patterns" value="baseline and differential"/>
</dbReference>
<dbReference type="GO" id="GO:0030126">
    <property type="term" value="C:COPI vesicle coat"/>
    <property type="evidence" value="ECO:0000318"/>
    <property type="project" value="GO_Central"/>
</dbReference>
<dbReference type="GO" id="GO:0000139">
    <property type="term" value="C:Golgi membrane"/>
    <property type="evidence" value="ECO:0007669"/>
    <property type="project" value="UniProtKB-SubCell"/>
</dbReference>
<dbReference type="GO" id="GO:0006891">
    <property type="term" value="P:intra-Golgi vesicle-mediated transport"/>
    <property type="evidence" value="ECO:0000318"/>
    <property type="project" value="GO_Central"/>
</dbReference>
<dbReference type="GO" id="GO:0006886">
    <property type="term" value="P:intracellular protein transport"/>
    <property type="evidence" value="ECO:0000318"/>
    <property type="project" value="GO_Central"/>
</dbReference>
<dbReference type="GO" id="GO:0006890">
    <property type="term" value="P:retrograde vesicle-mediated transport, Golgi to endoplasmic reticulum"/>
    <property type="evidence" value="ECO:0000318"/>
    <property type="project" value="GO_Central"/>
</dbReference>
<dbReference type="CDD" id="cd14829">
    <property type="entry name" value="Zeta-COP"/>
    <property type="match status" value="1"/>
</dbReference>
<dbReference type="FunFam" id="3.30.450.60:FF:000014">
    <property type="entry name" value="Coatomer subunit zeta-2"/>
    <property type="match status" value="1"/>
</dbReference>
<dbReference type="Gene3D" id="3.30.450.60">
    <property type="match status" value="1"/>
</dbReference>
<dbReference type="InterPro" id="IPR022775">
    <property type="entry name" value="AP_mu_sigma_su"/>
</dbReference>
<dbReference type="InterPro" id="IPR039652">
    <property type="entry name" value="Coatomer_zeta"/>
</dbReference>
<dbReference type="InterPro" id="IPR011012">
    <property type="entry name" value="Longin-like_dom_sf"/>
</dbReference>
<dbReference type="PANTHER" id="PTHR11043:SF17">
    <property type="entry name" value="COATOMER SUBUNIT ZETA-3"/>
    <property type="match status" value="1"/>
</dbReference>
<dbReference type="PANTHER" id="PTHR11043">
    <property type="entry name" value="ZETA-COAT PROTEIN"/>
    <property type="match status" value="1"/>
</dbReference>
<dbReference type="Pfam" id="PF01217">
    <property type="entry name" value="Clat_adaptor_s"/>
    <property type="match status" value="1"/>
</dbReference>
<dbReference type="SUPFAM" id="SSF64356">
    <property type="entry name" value="SNARE-like"/>
    <property type="match status" value="1"/>
</dbReference>